<accession>Q9LTW5</accession>
<name>AGC15_ARATH</name>
<protein>
    <recommendedName>
        <fullName evidence="7">Serine/threonine-protein kinase AGC1-5</fullName>
        <ecNumber evidence="3">2.7.11.1</ecNumber>
    </recommendedName>
    <alternativeName>
        <fullName evidence="5">AGC serine/threonine-protein kinase subfamily 1 member 5</fullName>
    </alternativeName>
</protein>
<proteinExistence type="evidence at protein level"/>
<evidence type="ECO:0000255" key="1">
    <source>
        <dbReference type="PROSITE-ProRule" id="PRU00159"/>
    </source>
</evidence>
<evidence type="ECO:0000256" key="2">
    <source>
        <dbReference type="SAM" id="MobiDB-lite"/>
    </source>
</evidence>
<evidence type="ECO:0000269" key="3">
    <source>
    </source>
</evidence>
<evidence type="ECO:0000269" key="4">
    <source>
    </source>
</evidence>
<evidence type="ECO:0000303" key="5">
    <source>
    </source>
</evidence>
<evidence type="ECO:0000303" key="6">
    <source>
    </source>
</evidence>
<evidence type="ECO:0000305" key="7"/>
<evidence type="ECO:0000312" key="8">
    <source>
        <dbReference type="Araport" id="AT3G12690"/>
    </source>
</evidence>
<keyword id="KW-0067">ATP-binding</keyword>
<keyword id="KW-0418">Kinase</keyword>
<keyword id="KW-0547">Nucleotide-binding</keyword>
<keyword id="KW-1185">Reference proteome</keyword>
<keyword id="KW-0723">Serine/threonine-protein kinase</keyword>
<keyword id="KW-0808">Transferase</keyword>
<reference key="1">
    <citation type="journal article" date="2000" name="DNA Res.">
        <title>Structural analysis of Arabidopsis thaliana chromosome 3. I. Sequence features of the regions of 4,504,864 bp covered by sixty P1 and TAC clones.</title>
        <authorList>
            <person name="Sato S."/>
            <person name="Nakamura Y."/>
            <person name="Kaneko T."/>
            <person name="Katoh T."/>
            <person name="Asamizu E."/>
            <person name="Tabata S."/>
        </authorList>
    </citation>
    <scope>NUCLEOTIDE SEQUENCE [LARGE SCALE GENOMIC DNA]</scope>
    <source>
        <strain>cv. Columbia</strain>
    </source>
</reference>
<reference key="2">
    <citation type="journal article" date="2017" name="Plant J.">
        <title>Araport11: a complete reannotation of the Arabidopsis thaliana reference genome.</title>
        <authorList>
            <person name="Cheng C.Y."/>
            <person name="Krishnakumar V."/>
            <person name="Chan A.P."/>
            <person name="Thibaud-Nissen F."/>
            <person name="Schobel S."/>
            <person name="Town C.D."/>
        </authorList>
    </citation>
    <scope>GENOME REANNOTATION</scope>
    <source>
        <strain>cv. Columbia</strain>
    </source>
</reference>
<reference key="3">
    <citation type="submission" date="2004-03" db="EMBL/GenBank/DDBJ databases">
        <title>Arabidopsis ORF clones.</title>
        <authorList>
            <person name="Cheuk R.F."/>
            <person name="Chen H."/>
            <person name="Kim C.J."/>
            <person name="Shinn P."/>
            <person name="Ecker J.R."/>
        </authorList>
    </citation>
    <scope>NUCLEOTIDE SEQUENCE [LARGE SCALE MRNA]</scope>
    <source>
        <strain>cv. Columbia</strain>
    </source>
</reference>
<reference key="4">
    <citation type="submission" date="2006-07" db="EMBL/GenBank/DDBJ databases">
        <title>Large-scale analysis of RIKEN Arabidopsis full-length (RAFL) cDNAs.</title>
        <authorList>
            <person name="Totoki Y."/>
            <person name="Seki M."/>
            <person name="Ishida J."/>
            <person name="Nakajima M."/>
            <person name="Enju A."/>
            <person name="Kamiya A."/>
            <person name="Narusaka M."/>
            <person name="Shin-i T."/>
            <person name="Nakagawa M."/>
            <person name="Sakamoto N."/>
            <person name="Oishi K."/>
            <person name="Kohara Y."/>
            <person name="Kobayashi M."/>
            <person name="Toyoda A."/>
            <person name="Sakaki Y."/>
            <person name="Sakurai T."/>
            <person name="Iida K."/>
            <person name="Akiyama K."/>
            <person name="Satou M."/>
            <person name="Toyoda T."/>
            <person name="Konagaya A."/>
            <person name="Carninci P."/>
            <person name="Kawai J."/>
            <person name="Hayashizaki Y."/>
            <person name="Shinozaki K."/>
        </authorList>
    </citation>
    <scope>NUCLEOTIDE SEQUENCE [LARGE SCALE MRNA]</scope>
    <source>
        <strain>cv. Columbia</strain>
    </source>
</reference>
<reference key="5">
    <citation type="journal article" date="2003" name="Trends Plant Sci.">
        <title>Growth signalling pathways in Arabidopsis and the AGC protein kinases.</title>
        <authorList>
            <person name="Boegre L."/>
            <person name="Okresz L."/>
            <person name="Henriques R."/>
            <person name="Anthony R.G."/>
        </authorList>
    </citation>
    <scope>GENE FAMILY</scope>
</reference>
<reference key="6">
    <citation type="journal article" date="2006" name="J. Biol. Chem.">
        <title>Structural and functional insights into the regulation of Arabidopsis AGC VIIIa kinases.</title>
        <authorList>
            <person name="Zegzouti H."/>
            <person name="Li W."/>
            <person name="Lorenz T.C."/>
            <person name="Xie M."/>
            <person name="Payne C.T."/>
            <person name="Smith K."/>
            <person name="Glenny S."/>
            <person name="Payne G.S."/>
            <person name="Christensen S.K."/>
        </authorList>
    </citation>
    <scope>CATALYTIC ACTIVITY</scope>
    <scope>ACTIVITY REGULATION</scope>
    <scope>INTERACTION WITH PDPK1/PDK1</scope>
    <scope>AUTOPHOSPHORYLATION</scope>
    <scope>PHOSPHORYLATION BY PDPK1/PDK1</scope>
</reference>
<reference key="7">
    <citation type="journal article" date="2009" name="Plant J.">
        <title>Two Arabidopsis AGC kinases are critical for the polarized growth of pollen tubes.</title>
        <authorList>
            <person name="Zhang Y."/>
            <person name="He J."/>
            <person name="McCormick S."/>
        </authorList>
    </citation>
    <scope>FUNCTION</scope>
    <scope>TISSUE SPECIFICITY</scope>
    <scope>DISRUPTION PHENOTYPE</scope>
</reference>
<dbReference type="EC" id="2.7.11.1" evidence="3"/>
<dbReference type="EMBL" id="AB024033">
    <property type="protein sequence ID" value="BAB02413.1"/>
    <property type="molecule type" value="Genomic_DNA"/>
</dbReference>
<dbReference type="EMBL" id="CP002686">
    <property type="protein sequence ID" value="AEE75233.1"/>
    <property type="molecule type" value="Genomic_DNA"/>
</dbReference>
<dbReference type="EMBL" id="CP002686">
    <property type="protein sequence ID" value="AEE75234.1"/>
    <property type="molecule type" value="Genomic_DNA"/>
</dbReference>
<dbReference type="EMBL" id="CP002686">
    <property type="protein sequence ID" value="AEE75235.1"/>
    <property type="molecule type" value="Genomic_DNA"/>
</dbReference>
<dbReference type="EMBL" id="BT011689">
    <property type="protein sequence ID" value="AAS49052.1"/>
    <property type="molecule type" value="mRNA"/>
</dbReference>
<dbReference type="EMBL" id="BT020332">
    <property type="protein sequence ID" value="AAV85687.1"/>
    <property type="molecule type" value="mRNA"/>
</dbReference>
<dbReference type="EMBL" id="AK229198">
    <property type="protein sequence ID" value="BAF01068.1"/>
    <property type="molecule type" value="mRNA"/>
</dbReference>
<dbReference type="RefSeq" id="NP_187875.1">
    <property type="nucleotide sequence ID" value="NM_112105.5"/>
</dbReference>
<dbReference type="RefSeq" id="NP_974295.1">
    <property type="nucleotide sequence ID" value="NM_202566.2"/>
</dbReference>
<dbReference type="RefSeq" id="NP_974296.1">
    <property type="nucleotide sequence ID" value="NM_202567.2"/>
</dbReference>
<dbReference type="SMR" id="Q9LTW5"/>
<dbReference type="BioGRID" id="5784">
    <property type="interactions" value="1"/>
</dbReference>
<dbReference type="FunCoup" id="Q9LTW5">
    <property type="interactions" value="137"/>
</dbReference>
<dbReference type="IntAct" id="Q9LTW5">
    <property type="interactions" value="1"/>
</dbReference>
<dbReference type="STRING" id="3702.Q9LTW5"/>
<dbReference type="GlyGen" id="Q9LTW5">
    <property type="glycosylation" value="1 site"/>
</dbReference>
<dbReference type="iPTMnet" id="Q9LTW5"/>
<dbReference type="PaxDb" id="3702-AT3G12690.2"/>
<dbReference type="ProteomicsDB" id="244883"/>
<dbReference type="EnsemblPlants" id="AT3G12690.1">
    <property type="protein sequence ID" value="AT3G12690.1"/>
    <property type="gene ID" value="AT3G12690"/>
</dbReference>
<dbReference type="EnsemblPlants" id="AT3G12690.2">
    <property type="protein sequence ID" value="AT3G12690.2"/>
    <property type="gene ID" value="AT3G12690"/>
</dbReference>
<dbReference type="EnsemblPlants" id="AT3G12690.3">
    <property type="protein sequence ID" value="AT3G12690.3"/>
    <property type="gene ID" value="AT3G12690"/>
</dbReference>
<dbReference type="GeneID" id="820450"/>
<dbReference type="Gramene" id="AT3G12690.1">
    <property type="protein sequence ID" value="AT3G12690.1"/>
    <property type="gene ID" value="AT3G12690"/>
</dbReference>
<dbReference type="Gramene" id="AT3G12690.2">
    <property type="protein sequence ID" value="AT3G12690.2"/>
    <property type="gene ID" value="AT3G12690"/>
</dbReference>
<dbReference type="Gramene" id="AT3G12690.3">
    <property type="protein sequence ID" value="AT3G12690.3"/>
    <property type="gene ID" value="AT3G12690"/>
</dbReference>
<dbReference type="KEGG" id="ath:AT3G12690"/>
<dbReference type="Araport" id="AT3G12690"/>
<dbReference type="TAIR" id="AT3G12690">
    <property type="gene designation" value="AGC1.5"/>
</dbReference>
<dbReference type="eggNOG" id="KOG0610">
    <property type="taxonomic scope" value="Eukaryota"/>
</dbReference>
<dbReference type="HOGENOM" id="CLU_000288_63_30_1"/>
<dbReference type="InParanoid" id="Q9LTW5"/>
<dbReference type="OMA" id="DTAYIDF"/>
<dbReference type="OrthoDB" id="432483at2759"/>
<dbReference type="PhylomeDB" id="Q9LTW5"/>
<dbReference type="PRO" id="PR:Q9LTW5"/>
<dbReference type="Proteomes" id="UP000006548">
    <property type="component" value="Chromosome 3"/>
</dbReference>
<dbReference type="ExpressionAtlas" id="Q9LTW5">
    <property type="expression patterns" value="baseline and differential"/>
</dbReference>
<dbReference type="GO" id="GO:0005524">
    <property type="term" value="F:ATP binding"/>
    <property type="evidence" value="ECO:0007669"/>
    <property type="project" value="UniProtKB-KW"/>
</dbReference>
<dbReference type="GO" id="GO:0016301">
    <property type="term" value="F:kinase activity"/>
    <property type="evidence" value="ECO:0000250"/>
    <property type="project" value="TAIR"/>
</dbReference>
<dbReference type="GO" id="GO:0106310">
    <property type="term" value="F:protein serine kinase activity"/>
    <property type="evidence" value="ECO:0007669"/>
    <property type="project" value="RHEA"/>
</dbReference>
<dbReference type="GO" id="GO:0004674">
    <property type="term" value="F:protein serine/threonine kinase activity"/>
    <property type="evidence" value="ECO:0007669"/>
    <property type="project" value="UniProtKB-KW"/>
</dbReference>
<dbReference type="GO" id="GO:0009860">
    <property type="term" value="P:pollen tube growth"/>
    <property type="evidence" value="ECO:0000316"/>
    <property type="project" value="TAIR"/>
</dbReference>
<dbReference type="GO" id="GO:0009826">
    <property type="term" value="P:unidimensional cell growth"/>
    <property type="evidence" value="ECO:0000316"/>
    <property type="project" value="TAIR"/>
</dbReference>
<dbReference type="CDD" id="cd05574">
    <property type="entry name" value="STKc_phototropin_like"/>
    <property type="match status" value="1"/>
</dbReference>
<dbReference type="FunFam" id="1.10.510.10:FF:000295">
    <property type="entry name" value="Serine/threonine-protein kinase AGC1-7"/>
    <property type="match status" value="1"/>
</dbReference>
<dbReference type="FunFam" id="3.30.200.20:FF:000032">
    <property type="entry name" value="Serine/threonine-protein kinase D6PK-like"/>
    <property type="match status" value="1"/>
</dbReference>
<dbReference type="FunFam" id="1.10.510.10:FF:000028">
    <property type="entry name" value="serine/threonine-protein kinase D6PK-like"/>
    <property type="match status" value="1"/>
</dbReference>
<dbReference type="Gene3D" id="3.30.200.20">
    <property type="entry name" value="Phosphorylase Kinase, domain 1"/>
    <property type="match status" value="1"/>
</dbReference>
<dbReference type="Gene3D" id="1.10.510.10">
    <property type="entry name" value="Transferase(Phosphotransferase) domain 1"/>
    <property type="match status" value="1"/>
</dbReference>
<dbReference type="InterPro" id="IPR011009">
    <property type="entry name" value="Kinase-like_dom_sf"/>
</dbReference>
<dbReference type="InterPro" id="IPR000719">
    <property type="entry name" value="Prot_kinase_dom"/>
</dbReference>
<dbReference type="InterPro" id="IPR008271">
    <property type="entry name" value="Ser/Thr_kinase_AS"/>
</dbReference>
<dbReference type="PANTHER" id="PTHR45637">
    <property type="entry name" value="FLIPPASE KINASE 1-RELATED"/>
    <property type="match status" value="1"/>
</dbReference>
<dbReference type="Pfam" id="PF00069">
    <property type="entry name" value="Pkinase"/>
    <property type="match status" value="2"/>
</dbReference>
<dbReference type="SMART" id="SM00220">
    <property type="entry name" value="S_TKc"/>
    <property type="match status" value="1"/>
</dbReference>
<dbReference type="SUPFAM" id="SSF56112">
    <property type="entry name" value="Protein kinase-like (PK-like)"/>
    <property type="match status" value="1"/>
</dbReference>
<dbReference type="PROSITE" id="PS50011">
    <property type="entry name" value="PROTEIN_KINASE_DOM"/>
    <property type="match status" value="1"/>
</dbReference>
<dbReference type="PROSITE" id="PS00108">
    <property type="entry name" value="PROTEIN_KINASE_ST"/>
    <property type="match status" value="1"/>
</dbReference>
<sequence>MDLASKKNTANVGSKEIDPIKPKSPRSSLSPFSLKLGDNVPRNPHFDPKKMDPLVKHQPPKSLEPPPSTRGTNSEGDLKHNTYSSDGDSLAMRKNAPKNLHYDPKKIVPLTTSETYSPSARNHHHHRTKSPDKKRAPRHNGDYAYGDNLVGPSAQPFKPHTGGDVRWDAINSIASKGPQIGLDNFRLLKRLGYGDIGSVYLADLRGTNAVFAMKVMDKASLASRNKLLRAQTEREILSLLDHPFLPTLYSYFETDKFYCLVMEFCSGGNLHSLRQKQPSRRFTEEAARFYASEVLLALEYLHMLGVVYRDLKPENILVRDEGHIMLSDFDLSLRCTFNPTLVKSSSVCSGGGAILNEEFAVNGCMHPSAFLPRLLPSKKTRKAKSDSGLGGLSMPELMAEPTDVRSMSFVGTHEYLAPEIIRGEGHGSAVDWWTFGIFLYELLHGTTPFKGQGNRATLHNVVGQPLKFPDTPHVSSAARDLIRGLLVKDPHRRIAYTRGATEIKQHPFFEGVNWALVRSAAPPHIPDPVDLGPYAAARGKTKSHGGGDHCNSMKPEPLVACAAGPTDDTAYIDFEYF</sequence>
<organism>
    <name type="scientific">Arabidopsis thaliana</name>
    <name type="common">Mouse-ear cress</name>
    <dbReference type="NCBI Taxonomy" id="3702"/>
    <lineage>
        <taxon>Eukaryota</taxon>
        <taxon>Viridiplantae</taxon>
        <taxon>Streptophyta</taxon>
        <taxon>Embryophyta</taxon>
        <taxon>Tracheophyta</taxon>
        <taxon>Spermatophyta</taxon>
        <taxon>Magnoliopsida</taxon>
        <taxon>eudicotyledons</taxon>
        <taxon>Gunneridae</taxon>
        <taxon>Pentapetalae</taxon>
        <taxon>rosids</taxon>
        <taxon>malvids</taxon>
        <taxon>Brassicales</taxon>
        <taxon>Brassicaceae</taxon>
        <taxon>Camelineae</taxon>
        <taxon>Arabidopsis</taxon>
    </lineage>
</organism>
<gene>
    <name evidence="5" type="primary">AGC1-5</name>
    <name evidence="6" type="synonym">AGC1.5</name>
    <name evidence="8" type="ordered locus">At3g12690</name>
</gene>
<feature type="chain" id="PRO_0000431358" description="Serine/threonine-protein kinase AGC1-5">
    <location>
        <begin position="1"/>
        <end position="577"/>
    </location>
</feature>
<feature type="domain" description="Protein kinase" evidence="1">
    <location>
        <begin position="185"/>
        <end position="509"/>
    </location>
</feature>
<feature type="domain" description="AGC-kinase C-terminal" evidence="7">
    <location>
        <begin position="510"/>
        <end position="577"/>
    </location>
</feature>
<feature type="region of interest" description="Disordered" evidence="2">
    <location>
        <begin position="1"/>
        <end position="151"/>
    </location>
</feature>
<feature type="compositionally biased region" description="Polar residues" evidence="2">
    <location>
        <begin position="1"/>
        <end position="12"/>
    </location>
</feature>
<feature type="compositionally biased region" description="Basic and acidic residues" evidence="2">
    <location>
        <begin position="44"/>
        <end position="55"/>
    </location>
</feature>
<feature type="compositionally biased region" description="Polar residues" evidence="2">
    <location>
        <begin position="69"/>
        <end position="87"/>
    </location>
</feature>
<feature type="compositionally biased region" description="Polar residues" evidence="2">
    <location>
        <begin position="110"/>
        <end position="120"/>
    </location>
</feature>
<feature type="active site" description="Proton acceptor" evidence="1">
    <location>
        <position position="310"/>
    </location>
</feature>
<feature type="binding site" evidence="1">
    <location>
        <begin position="191"/>
        <end position="199"/>
    </location>
    <ligand>
        <name>ATP</name>
        <dbReference type="ChEBI" id="CHEBI:30616"/>
    </ligand>
</feature>
<feature type="binding site" evidence="1">
    <location>
        <position position="214"/>
    </location>
    <ligand>
        <name>ATP</name>
        <dbReference type="ChEBI" id="CHEBI:30616"/>
    </ligand>
</feature>
<comment type="function">
    <text evidence="4">Functions redudantly with AGC1-7 as signaling component in the pollen tube. Required for polarized growth of pollen tubes.</text>
</comment>
<comment type="catalytic activity">
    <reaction evidence="3">
        <text>L-seryl-[protein] + ATP = O-phospho-L-seryl-[protein] + ADP + H(+)</text>
        <dbReference type="Rhea" id="RHEA:17989"/>
        <dbReference type="Rhea" id="RHEA-COMP:9863"/>
        <dbReference type="Rhea" id="RHEA-COMP:11604"/>
        <dbReference type="ChEBI" id="CHEBI:15378"/>
        <dbReference type="ChEBI" id="CHEBI:29999"/>
        <dbReference type="ChEBI" id="CHEBI:30616"/>
        <dbReference type="ChEBI" id="CHEBI:83421"/>
        <dbReference type="ChEBI" id="CHEBI:456216"/>
        <dbReference type="EC" id="2.7.11.1"/>
    </reaction>
</comment>
<comment type="catalytic activity">
    <reaction evidence="3">
        <text>L-threonyl-[protein] + ATP = O-phospho-L-threonyl-[protein] + ADP + H(+)</text>
        <dbReference type="Rhea" id="RHEA:46608"/>
        <dbReference type="Rhea" id="RHEA-COMP:11060"/>
        <dbReference type="Rhea" id="RHEA-COMP:11605"/>
        <dbReference type="ChEBI" id="CHEBI:15378"/>
        <dbReference type="ChEBI" id="CHEBI:30013"/>
        <dbReference type="ChEBI" id="CHEBI:30616"/>
        <dbReference type="ChEBI" id="CHEBI:61977"/>
        <dbReference type="ChEBI" id="CHEBI:456216"/>
        <dbReference type="EC" id="2.7.11.1"/>
    </reaction>
</comment>
<comment type="activity regulation">
    <text evidence="3">Activated by PDPK1/PDK1.</text>
</comment>
<comment type="subunit">
    <text evidence="3">Interacts with PDPK1/PDK1.</text>
</comment>
<comment type="interaction">
    <interactant intactId="EBI-1103747">
        <id>Q9LTW5</id>
    </interactant>
    <interactant intactId="EBI-1103587">
        <id>Q9XF67</id>
        <label>PDPK1</label>
    </interactant>
    <organismsDiffer>false</organismsDiffer>
    <experiments>3</experiments>
</comment>
<comment type="tissue specificity">
    <text evidence="4">Specifically expressed in pollen grains.</text>
</comment>
<comment type="PTM">
    <text evidence="3">Autophosphorylated and phosphorylated by PDPK1/PDK1.</text>
</comment>
<comment type="disruption phenotype">
    <text evidence="4">No visible phenotype under normal growth conditions, but pollen of the double mutants agc1.5 and agc1.7 is impaired in polarized growth of pollen tube.</text>
</comment>
<comment type="similarity">
    <text evidence="7">Belongs to the protein kinase superfamily. AGC Ser/Thr protein kinase family.</text>
</comment>